<gene>
    <name evidence="1" type="primary">rpmE2-1</name>
    <name type="ordered locus">SAV_1572</name>
</gene>
<comment type="subunit">
    <text evidence="1">Part of the 50S ribosomal subunit.</text>
</comment>
<comment type="similarity">
    <text evidence="1">Belongs to the bacterial ribosomal protein bL31 family. Type B subfamily.</text>
</comment>
<feature type="chain" id="PRO_0000173265" description="Large ribosomal subunit protein bL31B-1">
    <location>
        <begin position="1"/>
        <end position="91"/>
    </location>
</feature>
<reference key="1">
    <citation type="journal article" date="2001" name="Proc. Natl. Acad. Sci. U.S.A.">
        <title>Genome sequence of an industrial microorganism Streptomyces avermitilis: deducing the ability of producing secondary metabolites.</title>
        <authorList>
            <person name="Omura S."/>
            <person name="Ikeda H."/>
            <person name="Ishikawa J."/>
            <person name="Hanamoto A."/>
            <person name="Takahashi C."/>
            <person name="Shinose M."/>
            <person name="Takahashi Y."/>
            <person name="Horikawa H."/>
            <person name="Nakazawa H."/>
            <person name="Osonoe T."/>
            <person name="Kikuchi H."/>
            <person name="Shiba T."/>
            <person name="Sakaki Y."/>
            <person name="Hattori M."/>
        </authorList>
    </citation>
    <scope>NUCLEOTIDE SEQUENCE [LARGE SCALE GENOMIC DNA]</scope>
    <source>
        <strain>ATCC 31267 / DSM 46492 / JCM 5070 / NBRC 14893 / NCIMB 12804 / NRRL 8165 / MA-4680</strain>
    </source>
</reference>
<reference key="2">
    <citation type="journal article" date="2003" name="Nat. Biotechnol.">
        <title>Complete genome sequence and comparative analysis of the industrial microorganism Streptomyces avermitilis.</title>
        <authorList>
            <person name="Ikeda H."/>
            <person name="Ishikawa J."/>
            <person name="Hanamoto A."/>
            <person name="Shinose M."/>
            <person name="Kikuchi H."/>
            <person name="Shiba T."/>
            <person name="Sakaki Y."/>
            <person name="Hattori M."/>
            <person name="Omura S."/>
        </authorList>
    </citation>
    <scope>NUCLEOTIDE SEQUENCE [LARGE SCALE GENOMIC DNA]</scope>
    <source>
        <strain>ATCC 31267 / DSM 46492 / JCM 5070 / NBRC 14893 / NCIMB 12804 / NRRL 8165 / MA-4680</strain>
    </source>
</reference>
<dbReference type="EMBL" id="BA000030">
    <property type="protein sequence ID" value="BAC69283.1"/>
    <property type="molecule type" value="Genomic_DNA"/>
</dbReference>
<dbReference type="RefSeq" id="WP_010983011.1">
    <property type="nucleotide sequence ID" value="NZ_JZJK01000086.1"/>
</dbReference>
<dbReference type="SMR" id="Q82MT8"/>
<dbReference type="GeneID" id="41538669"/>
<dbReference type="KEGG" id="sma:SAVERM_1572"/>
<dbReference type="eggNOG" id="COG0254">
    <property type="taxonomic scope" value="Bacteria"/>
</dbReference>
<dbReference type="HOGENOM" id="CLU_114306_2_2_11"/>
<dbReference type="OrthoDB" id="9803251at2"/>
<dbReference type="Proteomes" id="UP000000428">
    <property type="component" value="Chromosome"/>
</dbReference>
<dbReference type="GO" id="GO:1990904">
    <property type="term" value="C:ribonucleoprotein complex"/>
    <property type="evidence" value="ECO:0007669"/>
    <property type="project" value="UniProtKB-KW"/>
</dbReference>
<dbReference type="GO" id="GO:0005840">
    <property type="term" value="C:ribosome"/>
    <property type="evidence" value="ECO:0007669"/>
    <property type="project" value="UniProtKB-KW"/>
</dbReference>
<dbReference type="GO" id="GO:0003735">
    <property type="term" value="F:structural constituent of ribosome"/>
    <property type="evidence" value="ECO:0007669"/>
    <property type="project" value="InterPro"/>
</dbReference>
<dbReference type="GO" id="GO:0006412">
    <property type="term" value="P:translation"/>
    <property type="evidence" value="ECO:0007669"/>
    <property type="project" value="UniProtKB-UniRule"/>
</dbReference>
<dbReference type="Gene3D" id="4.10.830.30">
    <property type="entry name" value="Ribosomal protein L31"/>
    <property type="match status" value="1"/>
</dbReference>
<dbReference type="HAMAP" id="MF_00502">
    <property type="entry name" value="Ribosomal_bL31_2"/>
    <property type="match status" value="1"/>
</dbReference>
<dbReference type="InterPro" id="IPR034704">
    <property type="entry name" value="Ribosomal_bL28/bL31-like_sf"/>
</dbReference>
<dbReference type="InterPro" id="IPR002150">
    <property type="entry name" value="Ribosomal_bL31"/>
</dbReference>
<dbReference type="InterPro" id="IPR027493">
    <property type="entry name" value="Ribosomal_bL31_B"/>
</dbReference>
<dbReference type="InterPro" id="IPR042105">
    <property type="entry name" value="Ribosomal_bL31_sf"/>
</dbReference>
<dbReference type="NCBIfam" id="TIGR00105">
    <property type="entry name" value="L31"/>
    <property type="match status" value="1"/>
</dbReference>
<dbReference type="NCBIfam" id="NF002462">
    <property type="entry name" value="PRK01678.1"/>
    <property type="match status" value="1"/>
</dbReference>
<dbReference type="PANTHER" id="PTHR33280">
    <property type="entry name" value="50S RIBOSOMAL PROTEIN L31, CHLOROPLASTIC"/>
    <property type="match status" value="1"/>
</dbReference>
<dbReference type="PANTHER" id="PTHR33280:SF1">
    <property type="entry name" value="LARGE RIBOSOMAL SUBUNIT PROTEIN BL31C"/>
    <property type="match status" value="1"/>
</dbReference>
<dbReference type="Pfam" id="PF01197">
    <property type="entry name" value="Ribosomal_L31"/>
    <property type="match status" value="1"/>
</dbReference>
<dbReference type="PRINTS" id="PR01249">
    <property type="entry name" value="RIBOSOMALL31"/>
</dbReference>
<dbReference type="SUPFAM" id="SSF143800">
    <property type="entry name" value="L28p-like"/>
    <property type="match status" value="1"/>
</dbReference>
<dbReference type="PROSITE" id="PS01143">
    <property type="entry name" value="RIBOSOMAL_L31"/>
    <property type="match status" value="1"/>
</dbReference>
<organism>
    <name type="scientific">Streptomyces avermitilis (strain ATCC 31267 / DSM 46492 / JCM 5070 / NBRC 14893 / NCIMB 12804 / NRRL 8165 / MA-4680)</name>
    <dbReference type="NCBI Taxonomy" id="227882"/>
    <lineage>
        <taxon>Bacteria</taxon>
        <taxon>Bacillati</taxon>
        <taxon>Actinomycetota</taxon>
        <taxon>Actinomycetes</taxon>
        <taxon>Kitasatosporales</taxon>
        <taxon>Streptomycetaceae</taxon>
        <taxon>Streptomyces</taxon>
    </lineage>
</organism>
<evidence type="ECO:0000255" key="1">
    <source>
        <dbReference type="HAMAP-Rule" id="MF_00502"/>
    </source>
</evidence>
<evidence type="ECO:0000305" key="2"/>
<sequence>MQQDKQPDYHPVVFRDRAAGYAFLTRSTATSDKTIEWDDGETYPVVDVEISSESHPFYTGKARTVDSEGRIAQFERRYGSTGPGSDGGGAA</sequence>
<keyword id="KW-1185">Reference proteome</keyword>
<keyword id="KW-0687">Ribonucleoprotein</keyword>
<keyword id="KW-0689">Ribosomal protein</keyword>
<proteinExistence type="inferred from homology"/>
<name>R31B1_STRAW</name>
<protein>
    <recommendedName>
        <fullName evidence="1">Large ribosomal subunit protein bL31B-1</fullName>
    </recommendedName>
    <alternativeName>
        <fullName evidence="2">50S ribosomal protein L31 type B 1</fullName>
    </alternativeName>
</protein>
<accession>Q82MT8</accession>